<reference key="1">
    <citation type="submission" date="2008-08" db="EMBL/GenBank/DDBJ databases">
        <title>Complete sequence of Vibrio fischeri strain MJ11.</title>
        <authorList>
            <person name="Mandel M.J."/>
            <person name="Stabb E.V."/>
            <person name="Ruby E.G."/>
            <person name="Ferriera S."/>
            <person name="Johnson J."/>
            <person name="Kravitz S."/>
            <person name="Beeson K."/>
            <person name="Sutton G."/>
            <person name="Rogers Y.-H."/>
            <person name="Friedman R."/>
            <person name="Frazier M."/>
            <person name="Venter J.C."/>
        </authorList>
    </citation>
    <scope>NUCLEOTIDE SEQUENCE [LARGE SCALE GENOMIC DNA]</scope>
    <source>
        <strain>MJ11</strain>
    </source>
</reference>
<evidence type="ECO:0000255" key="1">
    <source>
        <dbReference type="HAMAP-Rule" id="MF_00412"/>
    </source>
</evidence>
<proteinExistence type="inferred from homology"/>
<gene>
    <name evidence="1" type="primary">proA</name>
    <name type="ordered locus">VFMJ11_0760</name>
</gene>
<comment type="function">
    <text evidence="1">Catalyzes the NADPH-dependent reduction of L-glutamate 5-phosphate into L-glutamate 5-semialdehyde and phosphate. The product spontaneously undergoes cyclization to form 1-pyrroline-5-carboxylate.</text>
</comment>
<comment type="catalytic activity">
    <reaction evidence="1">
        <text>L-glutamate 5-semialdehyde + phosphate + NADP(+) = L-glutamyl 5-phosphate + NADPH + H(+)</text>
        <dbReference type="Rhea" id="RHEA:19541"/>
        <dbReference type="ChEBI" id="CHEBI:15378"/>
        <dbReference type="ChEBI" id="CHEBI:43474"/>
        <dbReference type="ChEBI" id="CHEBI:57783"/>
        <dbReference type="ChEBI" id="CHEBI:58066"/>
        <dbReference type="ChEBI" id="CHEBI:58274"/>
        <dbReference type="ChEBI" id="CHEBI:58349"/>
        <dbReference type="EC" id="1.2.1.41"/>
    </reaction>
</comment>
<comment type="pathway">
    <text evidence="1">Amino-acid biosynthesis; L-proline biosynthesis; L-glutamate 5-semialdehyde from L-glutamate: step 2/2.</text>
</comment>
<comment type="subcellular location">
    <subcellularLocation>
        <location evidence="1">Cytoplasm</location>
    </subcellularLocation>
</comment>
<comment type="similarity">
    <text evidence="1">Belongs to the gamma-glutamyl phosphate reductase family.</text>
</comment>
<organism>
    <name type="scientific">Aliivibrio fischeri (strain MJ11)</name>
    <name type="common">Vibrio fischeri</name>
    <dbReference type="NCBI Taxonomy" id="388396"/>
    <lineage>
        <taxon>Bacteria</taxon>
        <taxon>Pseudomonadati</taxon>
        <taxon>Pseudomonadota</taxon>
        <taxon>Gammaproteobacteria</taxon>
        <taxon>Vibrionales</taxon>
        <taxon>Vibrionaceae</taxon>
        <taxon>Aliivibrio</taxon>
    </lineage>
</organism>
<keyword id="KW-0028">Amino-acid biosynthesis</keyword>
<keyword id="KW-0963">Cytoplasm</keyword>
<keyword id="KW-0521">NADP</keyword>
<keyword id="KW-0560">Oxidoreductase</keyword>
<keyword id="KW-0641">Proline biosynthesis</keyword>
<sequence>MNLTTMGQAAKAAAFDLAVAPTAQKNKALAIIADELEANKDAILAANEKDIKAAVEAGISEAMQDRLLLTEERLVGIANDVRNVINLNDPVGSEIDSKVLENGMSLSRRRVPIGVIGVIYEARPNVTIDIASLCLKTGNASILRGGKETFFSNMELVKVIQVALEKAGLPAASVQYIEKPDRELVSQLLTMDDYVDMIIPRGGAGLHKMCKENSSIPVIIGGFGISHAFVDESADLERALVVVDNSKAQRPSACNALDTLLVHEAVAPQFLALLVNNMAGRVELVAEPKAYGLLKEFEGVSLREAQEGDFDTEWLSYTLGVKVVADVNEAAAHMQKHNASHSDTILTNNIESAEKFINTAGSAAVYVNASTRFTDGAQFGLGAEVAVSTQKLHARGPMGLEELTSYKWVGKADYLIRS</sequence>
<protein>
    <recommendedName>
        <fullName evidence="1">Gamma-glutamyl phosphate reductase</fullName>
        <shortName evidence="1">GPR</shortName>
        <ecNumber evidence="1">1.2.1.41</ecNumber>
    </recommendedName>
    <alternativeName>
        <fullName evidence="1">Glutamate-5-semialdehyde dehydrogenase</fullName>
    </alternativeName>
    <alternativeName>
        <fullName evidence="1">Glutamyl-gamma-semialdehyde dehydrogenase</fullName>
        <shortName evidence="1">GSA dehydrogenase</shortName>
    </alternativeName>
</protein>
<feature type="chain" id="PRO_1000193673" description="Gamma-glutamyl phosphate reductase">
    <location>
        <begin position="1"/>
        <end position="418"/>
    </location>
</feature>
<accession>B5FBJ5</accession>
<dbReference type="EC" id="1.2.1.41" evidence="1"/>
<dbReference type="EMBL" id="CP001139">
    <property type="protein sequence ID" value="ACH66355.1"/>
    <property type="molecule type" value="Genomic_DNA"/>
</dbReference>
<dbReference type="RefSeq" id="WP_012533667.1">
    <property type="nucleotide sequence ID" value="NC_011184.1"/>
</dbReference>
<dbReference type="SMR" id="B5FBJ5"/>
<dbReference type="KEGG" id="vfm:VFMJ11_0760"/>
<dbReference type="HOGENOM" id="CLU_030231_0_0_6"/>
<dbReference type="UniPathway" id="UPA00098">
    <property type="reaction ID" value="UER00360"/>
</dbReference>
<dbReference type="Proteomes" id="UP000001857">
    <property type="component" value="Chromosome I"/>
</dbReference>
<dbReference type="GO" id="GO:0005737">
    <property type="term" value="C:cytoplasm"/>
    <property type="evidence" value="ECO:0007669"/>
    <property type="project" value="UniProtKB-SubCell"/>
</dbReference>
<dbReference type="GO" id="GO:0004350">
    <property type="term" value="F:glutamate-5-semialdehyde dehydrogenase activity"/>
    <property type="evidence" value="ECO:0007669"/>
    <property type="project" value="UniProtKB-UniRule"/>
</dbReference>
<dbReference type="GO" id="GO:0050661">
    <property type="term" value="F:NADP binding"/>
    <property type="evidence" value="ECO:0007669"/>
    <property type="project" value="InterPro"/>
</dbReference>
<dbReference type="GO" id="GO:0055129">
    <property type="term" value="P:L-proline biosynthetic process"/>
    <property type="evidence" value="ECO:0007669"/>
    <property type="project" value="UniProtKB-UniRule"/>
</dbReference>
<dbReference type="CDD" id="cd07079">
    <property type="entry name" value="ALDH_F18-19_ProA-GPR"/>
    <property type="match status" value="1"/>
</dbReference>
<dbReference type="FunFam" id="3.40.309.10:FF:000006">
    <property type="entry name" value="Gamma-glutamyl phosphate reductase"/>
    <property type="match status" value="1"/>
</dbReference>
<dbReference type="Gene3D" id="3.40.605.10">
    <property type="entry name" value="Aldehyde Dehydrogenase, Chain A, domain 1"/>
    <property type="match status" value="1"/>
</dbReference>
<dbReference type="Gene3D" id="3.40.309.10">
    <property type="entry name" value="Aldehyde Dehydrogenase, Chain A, domain 2"/>
    <property type="match status" value="1"/>
</dbReference>
<dbReference type="HAMAP" id="MF_00412">
    <property type="entry name" value="ProA"/>
    <property type="match status" value="1"/>
</dbReference>
<dbReference type="InterPro" id="IPR016161">
    <property type="entry name" value="Ald_DH/histidinol_DH"/>
</dbReference>
<dbReference type="InterPro" id="IPR016163">
    <property type="entry name" value="Ald_DH_C"/>
</dbReference>
<dbReference type="InterPro" id="IPR016162">
    <property type="entry name" value="Ald_DH_N"/>
</dbReference>
<dbReference type="InterPro" id="IPR015590">
    <property type="entry name" value="Aldehyde_DH_dom"/>
</dbReference>
<dbReference type="InterPro" id="IPR020593">
    <property type="entry name" value="G-glutamylP_reductase_CS"/>
</dbReference>
<dbReference type="InterPro" id="IPR012134">
    <property type="entry name" value="Glu-5-SA_DH"/>
</dbReference>
<dbReference type="InterPro" id="IPR000965">
    <property type="entry name" value="GPR_dom"/>
</dbReference>
<dbReference type="NCBIfam" id="NF001221">
    <property type="entry name" value="PRK00197.1"/>
    <property type="match status" value="1"/>
</dbReference>
<dbReference type="NCBIfam" id="TIGR00407">
    <property type="entry name" value="proA"/>
    <property type="match status" value="1"/>
</dbReference>
<dbReference type="PANTHER" id="PTHR11063:SF8">
    <property type="entry name" value="DELTA-1-PYRROLINE-5-CARBOXYLATE SYNTHASE"/>
    <property type="match status" value="1"/>
</dbReference>
<dbReference type="PANTHER" id="PTHR11063">
    <property type="entry name" value="GLUTAMATE SEMIALDEHYDE DEHYDROGENASE"/>
    <property type="match status" value="1"/>
</dbReference>
<dbReference type="Pfam" id="PF00171">
    <property type="entry name" value="Aldedh"/>
    <property type="match status" value="1"/>
</dbReference>
<dbReference type="PIRSF" id="PIRSF000151">
    <property type="entry name" value="GPR"/>
    <property type="match status" value="1"/>
</dbReference>
<dbReference type="SUPFAM" id="SSF53720">
    <property type="entry name" value="ALDH-like"/>
    <property type="match status" value="1"/>
</dbReference>
<dbReference type="PROSITE" id="PS01223">
    <property type="entry name" value="PROA"/>
    <property type="match status" value="1"/>
</dbReference>
<name>PROA_ALIFM</name>